<protein>
    <recommendedName>
        <fullName evidence="1">tRNA pseudouridine synthase A</fullName>
        <ecNumber evidence="1">5.4.99.12</ecNumber>
    </recommendedName>
    <alternativeName>
        <fullName evidence="1">tRNA pseudouridine(38-40) synthase</fullName>
    </alternativeName>
    <alternativeName>
        <fullName evidence="1">tRNA pseudouridylate synthase I</fullName>
    </alternativeName>
    <alternativeName>
        <fullName evidence="1">tRNA-uridine isomerase I</fullName>
    </alternativeName>
</protein>
<reference key="1">
    <citation type="journal article" date="2008" name="PLoS ONE">
        <title>Comparative analysis of Acinetobacters: three genomes for three lifestyles.</title>
        <authorList>
            <person name="Vallenet D."/>
            <person name="Nordmann P."/>
            <person name="Barbe V."/>
            <person name="Poirel L."/>
            <person name="Mangenot S."/>
            <person name="Bataille E."/>
            <person name="Dossat C."/>
            <person name="Gas S."/>
            <person name="Kreimeyer A."/>
            <person name="Lenoble P."/>
            <person name="Oztas S."/>
            <person name="Poulain J."/>
            <person name="Segurens B."/>
            <person name="Robert C."/>
            <person name="Abergel C."/>
            <person name="Claverie J.-M."/>
            <person name="Raoult D."/>
            <person name="Medigue C."/>
            <person name="Weissenbach J."/>
            <person name="Cruveiller S."/>
        </authorList>
    </citation>
    <scope>NUCLEOTIDE SEQUENCE [LARGE SCALE GENOMIC DNA]</scope>
    <source>
        <strain>AYE</strain>
    </source>
</reference>
<proteinExistence type="inferred from homology"/>
<organism>
    <name type="scientific">Acinetobacter baumannii (strain AYE)</name>
    <dbReference type="NCBI Taxonomy" id="509173"/>
    <lineage>
        <taxon>Bacteria</taxon>
        <taxon>Pseudomonadati</taxon>
        <taxon>Pseudomonadota</taxon>
        <taxon>Gammaproteobacteria</taxon>
        <taxon>Moraxellales</taxon>
        <taxon>Moraxellaceae</taxon>
        <taxon>Acinetobacter</taxon>
        <taxon>Acinetobacter calcoaceticus/baumannii complex</taxon>
    </lineage>
</organism>
<accession>B0V4L0</accession>
<name>TRUA_ACIBY</name>
<evidence type="ECO:0000255" key="1">
    <source>
        <dbReference type="HAMAP-Rule" id="MF_00171"/>
    </source>
</evidence>
<keyword id="KW-0413">Isomerase</keyword>
<keyword id="KW-0819">tRNA processing</keyword>
<feature type="chain" id="PRO_1000097712" description="tRNA pseudouridine synthase A">
    <location>
        <begin position="1"/>
        <end position="265"/>
    </location>
</feature>
<feature type="active site" description="Nucleophile" evidence="1">
    <location>
        <position position="53"/>
    </location>
</feature>
<feature type="binding site" evidence="1">
    <location>
        <position position="111"/>
    </location>
    <ligand>
        <name>substrate</name>
    </ligand>
</feature>
<gene>
    <name evidence="1" type="primary">truA</name>
    <name type="ordered locus">ABAYE3352</name>
</gene>
<dbReference type="EC" id="5.4.99.12" evidence="1"/>
<dbReference type="EMBL" id="CU459141">
    <property type="protein sequence ID" value="CAM88148.1"/>
    <property type="molecule type" value="Genomic_DNA"/>
</dbReference>
<dbReference type="RefSeq" id="WP_001190110.1">
    <property type="nucleotide sequence ID" value="NZ_JBDGFB010000003.1"/>
</dbReference>
<dbReference type="SMR" id="B0V4L0"/>
<dbReference type="EnsemblBacteria" id="CAM88148">
    <property type="protein sequence ID" value="CAM88148"/>
    <property type="gene ID" value="ABAYE3352"/>
</dbReference>
<dbReference type="KEGG" id="aby:ABAYE3352"/>
<dbReference type="HOGENOM" id="CLU_014673_0_2_6"/>
<dbReference type="GO" id="GO:0003723">
    <property type="term" value="F:RNA binding"/>
    <property type="evidence" value="ECO:0007669"/>
    <property type="project" value="InterPro"/>
</dbReference>
<dbReference type="GO" id="GO:0160147">
    <property type="term" value="F:tRNA pseudouridine(38-40) synthase activity"/>
    <property type="evidence" value="ECO:0007669"/>
    <property type="project" value="UniProtKB-EC"/>
</dbReference>
<dbReference type="GO" id="GO:0031119">
    <property type="term" value="P:tRNA pseudouridine synthesis"/>
    <property type="evidence" value="ECO:0007669"/>
    <property type="project" value="UniProtKB-UniRule"/>
</dbReference>
<dbReference type="CDD" id="cd02570">
    <property type="entry name" value="PseudoU_synth_EcTruA"/>
    <property type="match status" value="1"/>
</dbReference>
<dbReference type="FunFam" id="3.30.70.580:FF:000001">
    <property type="entry name" value="tRNA pseudouridine synthase A"/>
    <property type="match status" value="1"/>
</dbReference>
<dbReference type="Gene3D" id="3.30.70.660">
    <property type="entry name" value="Pseudouridine synthase I, catalytic domain, C-terminal subdomain"/>
    <property type="match status" value="1"/>
</dbReference>
<dbReference type="Gene3D" id="3.30.70.580">
    <property type="entry name" value="Pseudouridine synthase I, catalytic domain, N-terminal subdomain"/>
    <property type="match status" value="1"/>
</dbReference>
<dbReference type="HAMAP" id="MF_00171">
    <property type="entry name" value="TruA"/>
    <property type="match status" value="1"/>
</dbReference>
<dbReference type="InterPro" id="IPR020103">
    <property type="entry name" value="PsdUridine_synth_cat_dom_sf"/>
</dbReference>
<dbReference type="InterPro" id="IPR001406">
    <property type="entry name" value="PsdUridine_synth_TruA"/>
</dbReference>
<dbReference type="InterPro" id="IPR020097">
    <property type="entry name" value="PsdUridine_synth_TruA_a/b_dom"/>
</dbReference>
<dbReference type="InterPro" id="IPR020095">
    <property type="entry name" value="PsdUridine_synth_TruA_C"/>
</dbReference>
<dbReference type="InterPro" id="IPR020094">
    <property type="entry name" value="TruA/RsuA/RluB/E/F_N"/>
</dbReference>
<dbReference type="NCBIfam" id="TIGR00071">
    <property type="entry name" value="hisT_truA"/>
    <property type="match status" value="1"/>
</dbReference>
<dbReference type="PANTHER" id="PTHR11142">
    <property type="entry name" value="PSEUDOURIDYLATE SYNTHASE"/>
    <property type="match status" value="1"/>
</dbReference>
<dbReference type="PANTHER" id="PTHR11142:SF0">
    <property type="entry name" value="TRNA PSEUDOURIDINE SYNTHASE-LIKE 1"/>
    <property type="match status" value="1"/>
</dbReference>
<dbReference type="Pfam" id="PF01416">
    <property type="entry name" value="PseudoU_synth_1"/>
    <property type="match status" value="2"/>
</dbReference>
<dbReference type="PIRSF" id="PIRSF001430">
    <property type="entry name" value="tRNA_psdUrid_synth"/>
    <property type="match status" value="1"/>
</dbReference>
<dbReference type="SUPFAM" id="SSF55120">
    <property type="entry name" value="Pseudouridine synthase"/>
    <property type="match status" value="1"/>
</dbReference>
<sequence>MQRYAVGIEFSGIQYRGWQTQQPGVASVQETIERVLSKIADEPITLHGAGRTDAGVHATNMVAHFDTTAIRPERGWIMGANSQLPKDISIQWIKQMDEEFHARFKATARRYRYVVYNAPHRPALLHKQVTHIYQKLDVQKMIKAASKFEGTHNFETFRAAACQSNQPVRHVKHCRLFQHGRYLVLDIQADGFLHHMVRNIMGCLLEIGQGMYEIDHIDTMFAAEDRKAAGITAPPDGLYFIQCYYPEQFDLPQPPLGPHWLNLPE</sequence>
<comment type="function">
    <text evidence="1">Formation of pseudouridine at positions 38, 39 and 40 in the anticodon stem and loop of transfer RNAs.</text>
</comment>
<comment type="catalytic activity">
    <reaction evidence="1">
        <text>uridine(38/39/40) in tRNA = pseudouridine(38/39/40) in tRNA</text>
        <dbReference type="Rhea" id="RHEA:22376"/>
        <dbReference type="Rhea" id="RHEA-COMP:10085"/>
        <dbReference type="Rhea" id="RHEA-COMP:10087"/>
        <dbReference type="ChEBI" id="CHEBI:65314"/>
        <dbReference type="ChEBI" id="CHEBI:65315"/>
        <dbReference type="EC" id="5.4.99.12"/>
    </reaction>
</comment>
<comment type="subunit">
    <text evidence="1">Homodimer.</text>
</comment>
<comment type="similarity">
    <text evidence="1">Belongs to the tRNA pseudouridine synthase TruA family.</text>
</comment>